<evidence type="ECO:0000255" key="1">
    <source>
        <dbReference type="HAMAP-Rule" id="MF_00251"/>
    </source>
</evidence>
<evidence type="ECO:0000305" key="2"/>
<dbReference type="EMBL" id="CP000577">
    <property type="protein sequence ID" value="ABN75186.1"/>
    <property type="molecule type" value="Genomic_DNA"/>
</dbReference>
<dbReference type="SMR" id="A3PFS0"/>
<dbReference type="KEGG" id="rsh:Rsph17029_0066"/>
<dbReference type="HOGENOM" id="CLU_135723_3_2_5"/>
<dbReference type="GO" id="GO:1990904">
    <property type="term" value="C:ribonucleoprotein complex"/>
    <property type="evidence" value="ECO:0007669"/>
    <property type="project" value="UniProtKB-KW"/>
</dbReference>
<dbReference type="GO" id="GO:0005840">
    <property type="term" value="C:ribosome"/>
    <property type="evidence" value="ECO:0007669"/>
    <property type="project" value="UniProtKB-KW"/>
</dbReference>
<dbReference type="GO" id="GO:0003735">
    <property type="term" value="F:structural constituent of ribosome"/>
    <property type="evidence" value="ECO:0007669"/>
    <property type="project" value="InterPro"/>
</dbReference>
<dbReference type="GO" id="GO:0006412">
    <property type="term" value="P:translation"/>
    <property type="evidence" value="ECO:0007669"/>
    <property type="project" value="UniProtKB-UniRule"/>
</dbReference>
<dbReference type="HAMAP" id="MF_00251">
    <property type="entry name" value="Ribosomal_bL36"/>
    <property type="match status" value="1"/>
</dbReference>
<dbReference type="InterPro" id="IPR000473">
    <property type="entry name" value="Ribosomal_bL36"/>
</dbReference>
<dbReference type="InterPro" id="IPR035977">
    <property type="entry name" value="Ribosomal_bL36_sp"/>
</dbReference>
<dbReference type="InterPro" id="IPR047621">
    <property type="entry name" value="Ribosomal_L36_bact"/>
</dbReference>
<dbReference type="NCBIfam" id="NF002021">
    <property type="entry name" value="PRK00831.1"/>
    <property type="match status" value="1"/>
</dbReference>
<dbReference type="NCBIfam" id="TIGR01022">
    <property type="entry name" value="rpmJ_bact"/>
    <property type="match status" value="1"/>
</dbReference>
<dbReference type="PANTHER" id="PTHR47781">
    <property type="entry name" value="50S RIBOSOMAL PROTEIN L36 2"/>
    <property type="match status" value="1"/>
</dbReference>
<dbReference type="PANTHER" id="PTHR47781:SF1">
    <property type="entry name" value="LARGE RIBOSOMAL SUBUNIT PROTEIN BL36B"/>
    <property type="match status" value="1"/>
</dbReference>
<dbReference type="Pfam" id="PF00444">
    <property type="entry name" value="Ribosomal_L36"/>
    <property type="match status" value="1"/>
</dbReference>
<dbReference type="SUPFAM" id="SSF57840">
    <property type="entry name" value="Ribosomal protein L36"/>
    <property type="match status" value="1"/>
</dbReference>
<protein>
    <recommendedName>
        <fullName evidence="1">Large ribosomal subunit protein bL36</fullName>
    </recommendedName>
    <alternativeName>
        <fullName evidence="2">50S ribosomal protein L36</fullName>
    </alternativeName>
</protein>
<proteinExistence type="inferred from homology"/>
<organism>
    <name type="scientific">Cereibacter sphaeroides (strain ATCC 17029 / ATH 2.4.9)</name>
    <name type="common">Rhodobacter sphaeroides</name>
    <dbReference type="NCBI Taxonomy" id="349101"/>
    <lineage>
        <taxon>Bacteria</taxon>
        <taxon>Pseudomonadati</taxon>
        <taxon>Pseudomonadota</taxon>
        <taxon>Alphaproteobacteria</taxon>
        <taxon>Rhodobacterales</taxon>
        <taxon>Paracoccaceae</taxon>
        <taxon>Cereibacter</taxon>
    </lineage>
</organism>
<name>RL36_CERS1</name>
<keyword id="KW-0687">Ribonucleoprotein</keyword>
<keyword id="KW-0689">Ribosomal protein</keyword>
<reference key="1">
    <citation type="submission" date="2007-02" db="EMBL/GenBank/DDBJ databases">
        <title>Complete sequence of chromosome 1 of Rhodobacter sphaeroides ATCC 17029.</title>
        <authorList>
            <person name="Copeland A."/>
            <person name="Lucas S."/>
            <person name="Lapidus A."/>
            <person name="Barry K."/>
            <person name="Detter J.C."/>
            <person name="Glavina del Rio T."/>
            <person name="Hammon N."/>
            <person name="Israni S."/>
            <person name="Dalin E."/>
            <person name="Tice H."/>
            <person name="Pitluck S."/>
            <person name="Kiss H."/>
            <person name="Brettin T."/>
            <person name="Bruce D."/>
            <person name="Han C."/>
            <person name="Tapia R."/>
            <person name="Gilna P."/>
            <person name="Schmutz J."/>
            <person name="Larimer F."/>
            <person name="Land M."/>
            <person name="Hauser L."/>
            <person name="Kyrpides N."/>
            <person name="Mikhailova N."/>
            <person name="Richardson P."/>
            <person name="Mackenzie C."/>
            <person name="Choudhary M."/>
            <person name="Donohue T.J."/>
            <person name="Kaplan S."/>
        </authorList>
    </citation>
    <scope>NUCLEOTIDE SEQUENCE [LARGE SCALE GENOMIC DNA]</scope>
    <source>
        <strain>ATCC 17029 / ATH 2.4.9</strain>
    </source>
</reference>
<gene>
    <name evidence="1" type="primary">rpmJ</name>
    <name type="ordered locus">Rsph17029_0066</name>
</gene>
<comment type="similarity">
    <text evidence="1">Belongs to the bacterial ribosomal protein bL36 family.</text>
</comment>
<accession>A3PFS0</accession>
<feature type="chain" id="PRO_0000302281" description="Large ribosomal subunit protein bL36">
    <location>
        <begin position="1"/>
        <end position="41"/>
    </location>
</feature>
<sequence>MKVANSLRSLKLRHRDCQVVRRKGRVYVINKTQKRYKARQG</sequence>